<proteinExistence type="inferred from homology"/>
<evidence type="ECO:0000255" key="1">
    <source>
        <dbReference type="HAMAP-Rule" id="MF_00443"/>
    </source>
</evidence>
<organism>
    <name type="scientific">Wolinella succinogenes (strain ATCC 29543 / DSM 1740 / CCUG 13145 / JCM 31913 / LMG 7466 / NCTC 11488 / FDC 602W)</name>
    <name type="common">Vibrio succinogenes</name>
    <dbReference type="NCBI Taxonomy" id="273121"/>
    <lineage>
        <taxon>Bacteria</taxon>
        <taxon>Pseudomonadati</taxon>
        <taxon>Campylobacterota</taxon>
        <taxon>Epsilonproteobacteria</taxon>
        <taxon>Campylobacterales</taxon>
        <taxon>Helicobacteraceae</taxon>
        <taxon>Wolinella</taxon>
    </lineage>
</organism>
<sequence>MNSDTLNIGNKIFQSRLIVGSGKYKDFKTTYEATMASEAEMITVAVRRVNITNPKEENLLDYFKGSSVQFLPNSAGCTTAEETITLFRLTREATGIDFIKLEIIGDTQKTLYPDVMETLKACEVLAKDGFTVLAYTNDDPIMARRLEEAGASAIMPLAAPIGSGLGIQNRYNVVFIKEAIKVPLIVDAGVGCASDAAIAMELGADAVLTNTAIAQAQNPILMASAMRDAVRAGRQSYLAGRIPKKPYASASSPTDGMARF</sequence>
<gene>
    <name evidence="1" type="primary">thiG</name>
    <name type="ordered locus">WS0954</name>
</gene>
<comment type="function">
    <text evidence="1">Catalyzes the rearrangement of 1-deoxy-D-xylulose 5-phosphate (DXP) to produce the thiazole phosphate moiety of thiamine. Sulfur is provided by the thiocarboxylate moiety of the carrier protein ThiS. In vitro, sulfur can be provided by H(2)S.</text>
</comment>
<comment type="catalytic activity">
    <reaction evidence="1">
        <text>[ThiS sulfur-carrier protein]-C-terminal-Gly-aminoethanethioate + 2-iminoacetate + 1-deoxy-D-xylulose 5-phosphate = [ThiS sulfur-carrier protein]-C-terminal Gly-Gly + 2-[(2R,5Z)-2-carboxy-4-methylthiazol-5(2H)-ylidene]ethyl phosphate + 2 H2O + H(+)</text>
        <dbReference type="Rhea" id="RHEA:26297"/>
        <dbReference type="Rhea" id="RHEA-COMP:12909"/>
        <dbReference type="Rhea" id="RHEA-COMP:19908"/>
        <dbReference type="ChEBI" id="CHEBI:15377"/>
        <dbReference type="ChEBI" id="CHEBI:15378"/>
        <dbReference type="ChEBI" id="CHEBI:57792"/>
        <dbReference type="ChEBI" id="CHEBI:62899"/>
        <dbReference type="ChEBI" id="CHEBI:77846"/>
        <dbReference type="ChEBI" id="CHEBI:90778"/>
        <dbReference type="ChEBI" id="CHEBI:232372"/>
        <dbReference type="EC" id="2.8.1.10"/>
    </reaction>
</comment>
<comment type="pathway">
    <text evidence="1">Cofactor biosynthesis; thiamine diphosphate biosynthesis.</text>
</comment>
<comment type="subunit">
    <text evidence="1">Homotetramer. Forms heterodimers with either ThiH or ThiS.</text>
</comment>
<comment type="subcellular location">
    <subcellularLocation>
        <location evidence="1">Cytoplasm</location>
    </subcellularLocation>
</comment>
<comment type="similarity">
    <text evidence="1">Belongs to the ThiG family.</text>
</comment>
<dbReference type="EC" id="2.8.1.10" evidence="1"/>
<dbReference type="EMBL" id="BX571659">
    <property type="protein sequence ID" value="CAE10057.1"/>
    <property type="molecule type" value="Genomic_DNA"/>
</dbReference>
<dbReference type="RefSeq" id="WP_011138853.1">
    <property type="nucleotide sequence ID" value="NC_005090.1"/>
</dbReference>
<dbReference type="SMR" id="Q7M9F6"/>
<dbReference type="STRING" id="273121.WS0954"/>
<dbReference type="KEGG" id="wsu:WS0954"/>
<dbReference type="eggNOG" id="COG2022">
    <property type="taxonomic scope" value="Bacteria"/>
</dbReference>
<dbReference type="HOGENOM" id="CLU_062233_1_0_7"/>
<dbReference type="UniPathway" id="UPA00060"/>
<dbReference type="Proteomes" id="UP000000422">
    <property type="component" value="Chromosome"/>
</dbReference>
<dbReference type="GO" id="GO:0005737">
    <property type="term" value="C:cytoplasm"/>
    <property type="evidence" value="ECO:0007669"/>
    <property type="project" value="UniProtKB-SubCell"/>
</dbReference>
<dbReference type="GO" id="GO:1990107">
    <property type="term" value="F:thiazole synthase activity"/>
    <property type="evidence" value="ECO:0007669"/>
    <property type="project" value="UniProtKB-EC"/>
</dbReference>
<dbReference type="GO" id="GO:0009229">
    <property type="term" value="P:thiamine diphosphate biosynthetic process"/>
    <property type="evidence" value="ECO:0007669"/>
    <property type="project" value="UniProtKB-UniRule"/>
</dbReference>
<dbReference type="CDD" id="cd04728">
    <property type="entry name" value="ThiG"/>
    <property type="match status" value="1"/>
</dbReference>
<dbReference type="Gene3D" id="3.20.20.70">
    <property type="entry name" value="Aldolase class I"/>
    <property type="match status" value="1"/>
</dbReference>
<dbReference type="HAMAP" id="MF_00443">
    <property type="entry name" value="ThiG"/>
    <property type="match status" value="1"/>
</dbReference>
<dbReference type="InterPro" id="IPR013785">
    <property type="entry name" value="Aldolase_TIM"/>
</dbReference>
<dbReference type="InterPro" id="IPR033983">
    <property type="entry name" value="Thiazole_synthase_ThiG"/>
</dbReference>
<dbReference type="InterPro" id="IPR008867">
    <property type="entry name" value="ThiG"/>
</dbReference>
<dbReference type="PANTHER" id="PTHR34266">
    <property type="entry name" value="THIAZOLE SYNTHASE"/>
    <property type="match status" value="1"/>
</dbReference>
<dbReference type="PANTHER" id="PTHR34266:SF2">
    <property type="entry name" value="THIAZOLE SYNTHASE"/>
    <property type="match status" value="1"/>
</dbReference>
<dbReference type="Pfam" id="PF05690">
    <property type="entry name" value="ThiG"/>
    <property type="match status" value="1"/>
</dbReference>
<dbReference type="SUPFAM" id="SSF110399">
    <property type="entry name" value="ThiG-like"/>
    <property type="match status" value="1"/>
</dbReference>
<reference key="1">
    <citation type="journal article" date="2003" name="Proc. Natl. Acad. Sci. U.S.A.">
        <title>Complete genome sequence and analysis of Wolinella succinogenes.</title>
        <authorList>
            <person name="Baar C."/>
            <person name="Eppinger M."/>
            <person name="Raddatz G."/>
            <person name="Simon J."/>
            <person name="Lanz C."/>
            <person name="Klimmek O."/>
            <person name="Nandakumar R."/>
            <person name="Gross R."/>
            <person name="Rosinus A."/>
            <person name="Keller H."/>
            <person name="Jagtap P."/>
            <person name="Linke B."/>
            <person name="Meyer F."/>
            <person name="Lederer H."/>
            <person name="Schuster S.C."/>
        </authorList>
    </citation>
    <scope>NUCLEOTIDE SEQUENCE [LARGE SCALE GENOMIC DNA]</scope>
    <source>
        <strain>ATCC 29543 / DSM 1740 / CCUG 13145 / JCM 31913 / LMG 7466 / NCTC 11488 / FDC 602W</strain>
    </source>
</reference>
<accession>Q7M9F6</accession>
<feature type="chain" id="PRO_0000162876" description="Thiazole synthase">
    <location>
        <begin position="1"/>
        <end position="260"/>
    </location>
</feature>
<feature type="active site" description="Schiff-base intermediate with DXP" evidence="1">
    <location>
        <position position="100"/>
    </location>
</feature>
<feature type="binding site" evidence="1">
    <location>
        <position position="162"/>
    </location>
    <ligand>
        <name>1-deoxy-D-xylulose 5-phosphate</name>
        <dbReference type="ChEBI" id="CHEBI:57792"/>
    </ligand>
</feature>
<feature type="binding site" evidence="1">
    <location>
        <begin position="188"/>
        <end position="189"/>
    </location>
    <ligand>
        <name>1-deoxy-D-xylulose 5-phosphate</name>
        <dbReference type="ChEBI" id="CHEBI:57792"/>
    </ligand>
</feature>
<feature type="binding site" evidence="1">
    <location>
        <begin position="210"/>
        <end position="211"/>
    </location>
    <ligand>
        <name>1-deoxy-D-xylulose 5-phosphate</name>
        <dbReference type="ChEBI" id="CHEBI:57792"/>
    </ligand>
</feature>
<protein>
    <recommendedName>
        <fullName evidence="1">Thiazole synthase</fullName>
        <ecNumber evidence="1">2.8.1.10</ecNumber>
    </recommendedName>
</protein>
<name>THIG_WOLSU</name>
<keyword id="KW-0963">Cytoplasm</keyword>
<keyword id="KW-1185">Reference proteome</keyword>
<keyword id="KW-0704">Schiff base</keyword>
<keyword id="KW-0784">Thiamine biosynthesis</keyword>
<keyword id="KW-0808">Transferase</keyword>